<sequence length="293" mass="31879">MMRIALFLLTNLAVMVVFGLVLSLTGIQSSSVQGLLIMALLFGFGGSFISLLMSKWMALKSVGGEVIEQPRNERERWLMNTVATQARQAGIAMPQVAIYHAPDINAFATGARRDASLVAVSTGLLQNMSPDEAEAVIAHEISHIANGDMVTMTLIQGVVNTFVIFISRIIAQIAAGFLGGNRDEGEGSNGNPLIYFAVATVLELVFGILASIITMWFSRYREFHADAGSAKLVGREKMIAALQRLKTSYEPQEATSMMAFCINGKSKSLSELFMTHPPLDKRIEALRSGEYLK</sequence>
<evidence type="ECO:0000255" key="1">
    <source>
        <dbReference type="HAMAP-Rule" id="MF_00188"/>
    </source>
</evidence>
<feature type="chain" id="PRO_1000124236" description="Protease HtpX">
    <location>
        <begin position="1"/>
        <end position="293"/>
    </location>
</feature>
<feature type="transmembrane region" description="Helical" evidence="1">
    <location>
        <begin position="4"/>
        <end position="24"/>
    </location>
</feature>
<feature type="transmembrane region" description="Helical" evidence="1">
    <location>
        <begin position="34"/>
        <end position="54"/>
    </location>
</feature>
<feature type="transmembrane region" description="Helical" evidence="1">
    <location>
        <begin position="158"/>
        <end position="178"/>
    </location>
</feature>
<feature type="transmembrane region" description="Helical" evidence="1">
    <location>
        <begin position="193"/>
        <end position="213"/>
    </location>
</feature>
<feature type="active site" evidence="1">
    <location>
        <position position="140"/>
    </location>
</feature>
<feature type="binding site" evidence="1">
    <location>
        <position position="139"/>
    </location>
    <ligand>
        <name>Zn(2+)</name>
        <dbReference type="ChEBI" id="CHEBI:29105"/>
        <note>catalytic</note>
    </ligand>
</feature>
<feature type="binding site" evidence="1">
    <location>
        <position position="143"/>
    </location>
    <ligand>
        <name>Zn(2+)</name>
        <dbReference type="ChEBI" id="CHEBI:29105"/>
        <note>catalytic</note>
    </ligand>
</feature>
<feature type="binding site" evidence="1">
    <location>
        <position position="222"/>
    </location>
    <ligand>
        <name>Zn(2+)</name>
        <dbReference type="ChEBI" id="CHEBI:29105"/>
        <note>catalytic</note>
    </ligand>
</feature>
<reference key="1">
    <citation type="journal article" date="2009" name="PLoS ONE">
        <title>Salmonella paratyphi C: genetic divergence from Salmonella choleraesuis and pathogenic convergence with Salmonella typhi.</title>
        <authorList>
            <person name="Liu W.-Q."/>
            <person name="Feng Y."/>
            <person name="Wang Y."/>
            <person name="Zou Q.-H."/>
            <person name="Chen F."/>
            <person name="Guo J.-T."/>
            <person name="Peng Y.-H."/>
            <person name="Jin Y."/>
            <person name="Li Y.-G."/>
            <person name="Hu S.-N."/>
            <person name="Johnston R.N."/>
            <person name="Liu G.-R."/>
            <person name="Liu S.-L."/>
        </authorList>
    </citation>
    <scope>NUCLEOTIDE SEQUENCE [LARGE SCALE GENOMIC DNA]</scope>
    <source>
        <strain>RKS4594</strain>
    </source>
</reference>
<proteinExistence type="inferred from homology"/>
<comment type="cofactor">
    <cofactor evidence="1">
        <name>Zn(2+)</name>
        <dbReference type="ChEBI" id="CHEBI:29105"/>
    </cofactor>
    <text evidence="1">Binds 1 zinc ion per subunit.</text>
</comment>
<comment type="subcellular location">
    <subcellularLocation>
        <location evidence="1">Cell inner membrane</location>
        <topology evidence="1">Multi-pass membrane protein</topology>
    </subcellularLocation>
</comment>
<comment type="similarity">
    <text evidence="1">Belongs to the peptidase M48B family.</text>
</comment>
<gene>
    <name evidence="1" type="primary">htpX</name>
    <name type="ordered locus">SPC_1885</name>
</gene>
<organism>
    <name type="scientific">Salmonella paratyphi C (strain RKS4594)</name>
    <dbReference type="NCBI Taxonomy" id="476213"/>
    <lineage>
        <taxon>Bacteria</taxon>
        <taxon>Pseudomonadati</taxon>
        <taxon>Pseudomonadota</taxon>
        <taxon>Gammaproteobacteria</taxon>
        <taxon>Enterobacterales</taxon>
        <taxon>Enterobacteriaceae</taxon>
        <taxon>Salmonella</taxon>
    </lineage>
</organism>
<accession>C0Q2Z1</accession>
<dbReference type="EC" id="3.4.24.-" evidence="1"/>
<dbReference type="EMBL" id="CP000857">
    <property type="protein sequence ID" value="ACN46023.1"/>
    <property type="molecule type" value="Genomic_DNA"/>
</dbReference>
<dbReference type="RefSeq" id="WP_000984498.1">
    <property type="nucleotide sequence ID" value="NC_012125.1"/>
</dbReference>
<dbReference type="SMR" id="C0Q2Z1"/>
<dbReference type="MEROPS" id="M48.002"/>
<dbReference type="GeneID" id="66756319"/>
<dbReference type="KEGG" id="sei:SPC_1885"/>
<dbReference type="HOGENOM" id="CLU_042266_1_0_6"/>
<dbReference type="Proteomes" id="UP000001599">
    <property type="component" value="Chromosome"/>
</dbReference>
<dbReference type="GO" id="GO:0005886">
    <property type="term" value="C:plasma membrane"/>
    <property type="evidence" value="ECO:0007669"/>
    <property type="project" value="UniProtKB-SubCell"/>
</dbReference>
<dbReference type="GO" id="GO:0004222">
    <property type="term" value="F:metalloendopeptidase activity"/>
    <property type="evidence" value="ECO:0007669"/>
    <property type="project" value="UniProtKB-UniRule"/>
</dbReference>
<dbReference type="GO" id="GO:0008270">
    <property type="term" value="F:zinc ion binding"/>
    <property type="evidence" value="ECO:0007669"/>
    <property type="project" value="UniProtKB-UniRule"/>
</dbReference>
<dbReference type="GO" id="GO:0006508">
    <property type="term" value="P:proteolysis"/>
    <property type="evidence" value="ECO:0007669"/>
    <property type="project" value="UniProtKB-KW"/>
</dbReference>
<dbReference type="CDD" id="cd07335">
    <property type="entry name" value="M48B_HtpX_like"/>
    <property type="match status" value="1"/>
</dbReference>
<dbReference type="FunFam" id="3.30.2010.10:FF:000001">
    <property type="entry name" value="Protease HtpX"/>
    <property type="match status" value="1"/>
</dbReference>
<dbReference type="Gene3D" id="3.30.2010.10">
    <property type="entry name" value="Metalloproteases ('zincins'), catalytic domain"/>
    <property type="match status" value="1"/>
</dbReference>
<dbReference type="HAMAP" id="MF_00188">
    <property type="entry name" value="Pept_M48_protease_HtpX"/>
    <property type="match status" value="1"/>
</dbReference>
<dbReference type="InterPro" id="IPR050083">
    <property type="entry name" value="HtpX_protease"/>
</dbReference>
<dbReference type="InterPro" id="IPR022919">
    <property type="entry name" value="Pept_M48_protease_HtpX"/>
</dbReference>
<dbReference type="InterPro" id="IPR001915">
    <property type="entry name" value="Peptidase_M48"/>
</dbReference>
<dbReference type="NCBIfam" id="NF003965">
    <property type="entry name" value="PRK05457.1"/>
    <property type="match status" value="1"/>
</dbReference>
<dbReference type="PANTHER" id="PTHR43221">
    <property type="entry name" value="PROTEASE HTPX"/>
    <property type="match status" value="1"/>
</dbReference>
<dbReference type="PANTHER" id="PTHR43221:SF1">
    <property type="entry name" value="PROTEASE HTPX"/>
    <property type="match status" value="1"/>
</dbReference>
<dbReference type="Pfam" id="PF01435">
    <property type="entry name" value="Peptidase_M48"/>
    <property type="match status" value="1"/>
</dbReference>
<protein>
    <recommendedName>
        <fullName evidence="1">Protease HtpX</fullName>
        <ecNumber evidence="1">3.4.24.-</ecNumber>
    </recommendedName>
    <alternativeName>
        <fullName evidence="1">Heat shock protein HtpX</fullName>
    </alternativeName>
</protein>
<name>HTPX_SALPC</name>
<keyword id="KW-0997">Cell inner membrane</keyword>
<keyword id="KW-1003">Cell membrane</keyword>
<keyword id="KW-0378">Hydrolase</keyword>
<keyword id="KW-0472">Membrane</keyword>
<keyword id="KW-0479">Metal-binding</keyword>
<keyword id="KW-0482">Metalloprotease</keyword>
<keyword id="KW-0645">Protease</keyword>
<keyword id="KW-0346">Stress response</keyword>
<keyword id="KW-0812">Transmembrane</keyword>
<keyword id="KW-1133">Transmembrane helix</keyword>
<keyword id="KW-0862">Zinc</keyword>